<comment type="function">
    <text evidence="6 10">Replication termination factor which is a component of the elongating replisome (Probable). Required for ATR pathway signaling upon DNA damage and has a positive activity during DNA replication. Might function to facilitate fork pausing at replication fork barriers like the rDNA. May be globally required to stimulate ATR signaling after the fork stalls or encounters a lesion (Probable). Interacts with nascent DNA (PubMed:29290612).</text>
</comment>
<comment type="subunit">
    <text evidence="6">Interacts with DDI2; probably also interacts with DDI1.</text>
</comment>
<comment type="interaction">
    <interactant intactId="EBI-1045669">
        <id>Q9BY42</id>
    </interactant>
    <interactant intactId="EBI-489954">
        <id>Q14315</id>
        <label>FLNC</label>
    </interactant>
    <organismsDiffer>false</organismsDiffer>
    <experiments>2</experiments>
</comment>
<comment type="subcellular location">
    <subcellularLocation>
        <location evidence="6">Chromosome</location>
    </subcellularLocation>
    <text evidence="6">Localizes at the replication fork.</text>
</comment>
<comment type="PTM">
    <text evidence="6">Undergoes proteasomal degradation, via DDI1 and DDI2. Removal from stalled replisomes and degradation are required for genome stability.</text>
</comment>
<comment type="similarity">
    <text evidence="9">Belongs to the rtf2 family.</text>
</comment>
<sequence>MGCDGGTIPKRHELVKGPKKVEKVDKDAELVAQWNYCTLSQEILRRPIVACELGRLYNKDAVIEFLLDKSAEKALGKAASHIKSIKNVTELKLSDNPAWEGDKGNTKGDKHDDLQRARFICPVVGLEMNGRHRFCFLRCCGCVFSERALKEIKAEVCHTCGAAFQEDDVIMLNGTKEDVDVLKTRMEERRLRAKLEKKTKKPKAAESVSKPDVSEEAPGPSKVKTGKPEEASLDSREKKTNLAPKSTAMNESSSGKAGKPPCGATKRSIADSEESEAYKSLFTTHSSAKRSKEESAHWVTHTSYCF</sequence>
<protein>
    <recommendedName>
        <fullName evidence="9">Replication termination factor 2</fullName>
        <shortName evidence="9">RTF2</shortName>
    </recommendedName>
    <alternativeName>
        <fullName evidence="9">Replication termination factor 2 domain-containing protein 1</fullName>
    </alternativeName>
</protein>
<reference key="1">
    <citation type="journal article" date="2000" name="Proc. Natl. Acad. Sci. U.S.A.">
        <title>Gene expression profiling in the human hypothalamus-pituitary-adrenal axis and full-length cDNA cloning.</title>
        <authorList>
            <person name="Hu R.-M."/>
            <person name="Han Z.-G."/>
            <person name="Song H.-D."/>
            <person name="Peng Y.-D."/>
            <person name="Huang Q.-H."/>
            <person name="Ren S.-X."/>
            <person name="Gu Y.-J."/>
            <person name="Huang C.-H."/>
            <person name="Li Y.-B."/>
            <person name="Jiang C.-L."/>
            <person name="Fu G."/>
            <person name="Zhang Q.-H."/>
            <person name="Gu B.-W."/>
            <person name="Dai M."/>
            <person name="Mao Y.-F."/>
            <person name="Gao G.-F."/>
            <person name="Rong R."/>
            <person name="Ye M."/>
            <person name="Zhou J."/>
            <person name="Xu S.-H."/>
            <person name="Gu J."/>
            <person name="Shi J.-X."/>
            <person name="Jin W.-R."/>
            <person name="Zhang C.-K."/>
            <person name="Wu T.-M."/>
            <person name="Huang G.-Y."/>
            <person name="Chen Z."/>
            <person name="Chen M.-D."/>
            <person name="Chen J.-L."/>
        </authorList>
    </citation>
    <scope>NUCLEOTIDE SEQUENCE [LARGE SCALE MRNA]</scope>
    <scope>VARIANT VAL-171</scope>
    <source>
        <tissue>Adrenal gland</tissue>
    </source>
</reference>
<reference key="2">
    <citation type="journal article" date="2000" name="Genome Res.">
        <title>Cloning and functional analysis of cDNAs with open reading frames for 300 previously undefined genes expressed in CD34+ hematopoietic stem/progenitor cells.</title>
        <authorList>
            <person name="Zhang Q.-H."/>
            <person name="Ye M."/>
            <person name="Wu X.-Y."/>
            <person name="Ren S.-X."/>
            <person name="Zhao M."/>
            <person name="Zhao C.-J."/>
            <person name="Fu G."/>
            <person name="Shen Y."/>
            <person name="Fan H.-Y."/>
            <person name="Lu G."/>
            <person name="Zhong M."/>
            <person name="Xu X.-R."/>
            <person name="Han Z.-G."/>
            <person name="Zhang J.-W."/>
            <person name="Tao J."/>
            <person name="Huang Q.-H."/>
            <person name="Zhou J."/>
            <person name="Hu G.-X."/>
            <person name="Gu J."/>
            <person name="Chen S.-J."/>
            <person name="Chen Z."/>
        </authorList>
    </citation>
    <scope>NUCLEOTIDE SEQUENCE [LARGE SCALE MRNA]</scope>
    <scope>VARIANT VAL-171</scope>
    <source>
        <tissue>Umbilical cord blood</tissue>
    </source>
</reference>
<reference key="3">
    <citation type="submission" date="1999-12" db="EMBL/GenBank/DDBJ databases">
        <title>A novel gene expressed in human pheochromocytoma.</title>
        <authorList>
            <person name="Li Y."/>
            <person name="Huang Q."/>
            <person name="Peng Y."/>
            <person name="Song H."/>
            <person name="Yu Y."/>
            <person name="Xu S."/>
            <person name="Ren S."/>
            <person name="Chen Z."/>
            <person name="Han Z."/>
        </authorList>
    </citation>
    <scope>NUCLEOTIDE SEQUENCE [LARGE SCALE MRNA]</scope>
    <scope>VARIANT VAL-171</scope>
    <source>
        <tissue>Pheochromocytoma</tissue>
    </source>
</reference>
<reference key="4">
    <citation type="journal article" date="2004" name="Nat. Genet.">
        <title>Complete sequencing and characterization of 21,243 full-length human cDNAs.</title>
        <authorList>
            <person name="Ota T."/>
            <person name="Suzuki Y."/>
            <person name="Nishikawa T."/>
            <person name="Otsuki T."/>
            <person name="Sugiyama T."/>
            <person name="Irie R."/>
            <person name="Wakamatsu A."/>
            <person name="Hayashi K."/>
            <person name="Sato H."/>
            <person name="Nagai K."/>
            <person name="Kimura K."/>
            <person name="Makita H."/>
            <person name="Sekine M."/>
            <person name="Obayashi M."/>
            <person name="Nishi T."/>
            <person name="Shibahara T."/>
            <person name="Tanaka T."/>
            <person name="Ishii S."/>
            <person name="Yamamoto J."/>
            <person name="Saito K."/>
            <person name="Kawai Y."/>
            <person name="Isono Y."/>
            <person name="Nakamura Y."/>
            <person name="Nagahari K."/>
            <person name="Murakami K."/>
            <person name="Yasuda T."/>
            <person name="Iwayanagi T."/>
            <person name="Wagatsuma M."/>
            <person name="Shiratori A."/>
            <person name="Sudo H."/>
            <person name="Hosoiri T."/>
            <person name="Kaku Y."/>
            <person name="Kodaira H."/>
            <person name="Kondo H."/>
            <person name="Sugawara M."/>
            <person name="Takahashi M."/>
            <person name="Kanda K."/>
            <person name="Yokoi T."/>
            <person name="Furuya T."/>
            <person name="Kikkawa E."/>
            <person name="Omura Y."/>
            <person name="Abe K."/>
            <person name="Kamihara K."/>
            <person name="Katsuta N."/>
            <person name="Sato K."/>
            <person name="Tanikawa M."/>
            <person name="Yamazaki M."/>
            <person name="Ninomiya K."/>
            <person name="Ishibashi T."/>
            <person name="Yamashita H."/>
            <person name="Murakawa K."/>
            <person name="Fujimori K."/>
            <person name="Tanai H."/>
            <person name="Kimata M."/>
            <person name="Watanabe M."/>
            <person name="Hiraoka S."/>
            <person name="Chiba Y."/>
            <person name="Ishida S."/>
            <person name="Ono Y."/>
            <person name="Takiguchi S."/>
            <person name="Watanabe S."/>
            <person name="Yosida M."/>
            <person name="Hotuta T."/>
            <person name="Kusano J."/>
            <person name="Kanehori K."/>
            <person name="Takahashi-Fujii A."/>
            <person name="Hara H."/>
            <person name="Tanase T.-O."/>
            <person name="Nomura Y."/>
            <person name="Togiya S."/>
            <person name="Komai F."/>
            <person name="Hara R."/>
            <person name="Takeuchi K."/>
            <person name="Arita M."/>
            <person name="Imose N."/>
            <person name="Musashino K."/>
            <person name="Yuuki H."/>
            <person name="Oshima A."/>
            <person name="Sasaki N."/>
            <person name="Aotsuka S."/>
            <person name="Yoshikawa Y."/>
            <person name="Matsunawa H."/>
            <person name="Ichihara T."/>
            <person name="Shiohata N."/>
            <person name="Sano S."/>
            <person name="Moriya S."/>
            <person name="Momiyama H."/>
            <person name="Satoh N."/>
            <person name="Takami S."/>
            <person name="Terashima Y."/>
            <person name="Suzuki O."/>
            <person name="Nakagawa S."/>
            <person name="Senoh A."/>
            <person name="Mizoguchi H."/>
            <person name="Goto Y."/>
            <person name="Shimizu F."/>
            <person name="Wakebe H."/>
            <person name="Hishigaki H."/>
            <person name="Watanabe T."/>
            <person name="Sugiyama A."/>
            <person name="Takemoto M."/>
            <person name="Kawakami B."/>
            <person name="Yamazaki M."/>
            <person name="Watanabe K."/>
            <person name="Kumagai A."/>
            <person name="Itakura S."/>
            <person name="Fukuzumi Y."/>
            <person name="Fujimori Y."/>
            <person name="Komiyama M."/>
            <person name="Tashiro H."/>
            <person name="Tanigami A."/>
            <person name="Fujiwara T."/>
            <person name="Ono T."/>
            <person name="Yamada K."/>
            <person name="Fujii Y."/>
            <person name="Ozaki K."/>
            <person name="Hirao M."/>
            <person name="Ohmori Y."/>
            <person name="Kawabata A."/>
            <person name="Hikiji T."/>
            <person name="Kobatake N."/>
            <person name="Inagaki H."/>
            <person name="Ikema Y."/>
            <person name="Okamoto S."/>
            <person name="Okitani R."/>
            <person name="Kawakami T."/>
            <person name="Noguchi S."/>
            <person name="Itoh T."/>
            <person name="Shigeta K."/>
            <person name="Senba T."/>
            <person name="Matsumura K."/>
            <person name="Nakajima Y."/>
            <person name="Mizuno T."/>
            <person name="Morinaga M."/>
            <person name="Sasaki M."/>
            <person name="Togashi T."/>
            <person name="Oyama M."/>
            <person name="Hata H."/>
            <person name="Watanabe M."/>
            <person name="Komatsu T."/>
            <person name="Mizushima-Sugano J."/>
            <person name="Satoh T."/>
            <person name="Shirai Y."/>
            <person name="Takahashi Y."/>
            <person name="Nakagawa K."/>
            <person name="Okumura K."/>
            <person name="Nagase T."/>
            <person name="Nomura N."/>
            <person name="Kikuchi H."/>
            <person name="Masuho Y."/>
            <person name="Yamashita R."/>
            <person name="Nakai K."/>
            <person name="Yada T."/>
            <person name="Nakamura Y."/>
            <person name="Ohara O."/>
            <person name="Isogai T."/>
            <person name="Sugano S."/>
        </authorList>
    </citation>
    <scope>NUCLEOTIDE SEQUENCE [LARGE SCALE MRNA]</scope>
    <scope>VARIANT VAL-171</scope>
</reference>
<reference key="5">
    <citation type="journal article" date="2001" name="Nature">
        <title>The DNA sequence and comparative analysis of human chromosome 20.</title>
        <authorList>
            <person name="Deloukas P."/>
            <person name="Matthews L.H."/>
            <person name="Ashurst J.L."/>
            <person name="Burton J."/>
            <person name="Gilbert J.G.R."/>
            <person name="Jones M."/>
            <person name="Stavrides G."/>
            <person name="Almeida J.P."/>
            <person name="Babbage A.K."/>
            <person name="Bagguley C.L."/>
            <person name="Bailey J."/>
            <person name="Barlow K.F."/>
            <person name="Bates K.N."/>
            <person name="Beard L.M."/>
            <person name="Beare D.M."/>
            <person name="Beasley O.P."/>
            <person name="Bird C.P."/>
            <person name="Blakey S.E."/>
            <person name="Bridgeman A.M."/>
            <person name="Brown A.J."/>
            <person name="Buck D."/>
            <person name="Burrill W.D."/>
            <person name="Butler A.P."/>
            <person name="Carder C."/>
            <person name="Carter N.P."/>
            <person name="Chapman J.C."/>
            <person name="Clamp M."/>
            <person name="Clark G."/>
            <person name="Clark L.N."/>
            <person name="Clark S.Y."/>
            <person name="Clee C.M."/>
            <person name="Clegg S."/>
            <person name="Cobley V.E."/>
            <person name="Collier R.E."/>
            <person name="Connor R.E."/>
            <person name="Corby N.R."/>
            <person name="Coulson A."/>
            <person name="Coville G.J."/>
            <person name="Deadman R."/>
            <person name="Dhami P.D."/>
            <person name="Dunn M."/>
            <person name="Ellington A.G."/>
            <person name="Frankland J.A."/>
            <person name="Fraser A."/>
            <person name="French L."/>
            <person name="Garner P."/>
            <person name="Grafham D.V."/>
            <person name="Griffiths C."/>
            <person name="Griffiths M.N.D."/>
            <person name="Gwilliam R."/>
            <person name="Hall R.E."/>
            <person name="Hammond S."/>
            <person name="Harley J.L."/>
            <person name="Heath P.D."/>
            <person name="Ho S."/>
            <person name="Holden J.L."/>
            <person name="Howden P.J."/>
            <person name="Huckle E."/>
            <person name="Hunt A.R."/>
            <person name="Hunt S.E."/>
            <person name="Jekosch K."/>
            <person name="Johnson C.M."/>
            <person name="Johnson D."/>
            <person name="Kay M.P."/>
            <person name="Kimberley A.M."/>
            <person name="King A."/>
            <person name="Knights A."/>
            <person name="Laird G.K."/>
            <person name="Lawlor S."/>
            <person name="Lehvaeslaiho M.H."/>
            <person name="Leversha M.A."/>
            <person name="Lloyd C."/>
            <person name="Lloyd D.M."/>
            <person name="Lovell J.D."/>
            <person name="Marsh V.L."/>
            <person name="Martin S.L."/>
            <person name="McConnachie L.J."/>
            <person name="McLay K."/>
            <person name="McMurray A.A."/>
            <person name="Milne S.A."/>
            <person name="Mistry D."/>
            <person name="Moore M.J.F."/>
            <person name="Mullikin J.C."/>
            <person name="Nickerson T."/>
            <person name="Oliver K."/>
            <person name="Parker A."/>
            <person name="Patel R."/>
            <person name="Pearce T.A.V."/>
            <person name="Peck A.I."/>
            <person name="Phillimore B.J.C.T."/>
            <person name="Prathalingam S.R."/>
            <person name="Plumb R.W."/>
            <person name="Ramsay H."/>
            <person name="Rice C.M."/>
            <person name="Ross M.T."/>
            <person name="Scott C.E."/>
            <person name="Sehra H.K."/>
            <person name="Shownkeen R."/>
            <person name="Sims S."/>
            <person name="Skuce C.D."/>
            <person name="Smith M.L."/>
            <person name="Soderlund C."/>
            <person name="Steward C.A."/>
            <person name="Sulston J.E."/>
            <person name="Swann R.M."/>
            <person name="Sycamore N."/>
            <person name="Taylor R."/>
            <person name="Tee L."/>
            <person name="Thomas D.W."/>
            <person name="Thorpe A."/>
            <person name="Tracey A."/>
            <person name="Tromans A.C."/>
            <person name="Vaudin M."/>
            <person name="Wall M."/>
            <person name="Wallis J.M."/>
            <person name="Whitehead S.L."/>
            <person name="Whittaker P."/>
            <person name="Willey D.L."/>
            <person name="Williams L."/>
            <person name="Williams S.A."/>
            <person name="Wilming L."/>
            <person name="Wray P.W."/>
            <person name="Hubbard T."/>
            <person name="Durbin R.M."/>
            <person name="Bentley D.R."/>
            <person name="Beck S."/>
            <person name="Rogers J."/>
        </authorList>
    </citation>
    <scope>NUCLEOTIDE SEQUENCE [LARGE SCALE GENOMIC DNA]</scope>
</reference>
<reference key="6">
    <citation type="submission" date="2005-09" db="EMBL/GenBank/DDBJ databases">
        <authorList>
            <person name="Mural R.J."/>
            <person name="Istrail S."/>
            <person name="Sutton G.G."/>
            <person name="Florea L."/>
            <person name="Halpern A.L."/>
            <person name="Mobarry C.M."/>
            <person name="Lippert R."/>
            <person name="Walenz B."/>
            <person name="Shatkay H."/>
            <person name="Dew I."/>
            <person name="Miller J.R."/>
            <person name="Flanigan M.J."/>
            <person name="Edwards N.J."/>
            <person name="Bolanos R."/>
            <person name="Fasulo D."/>
            <person name="Halldorsson B.V."/>
            <person name="Hannenhalli S."/>
            <person name="Turner R."/>
            <person name="Yooseph S."/>
            <person name="Lu F."/>
            <person name="Nusskern D.R."/>
            <person name="Shue B.C."/>
            <person name="Zheng X.H."/>
            <person name="Zhong F."/>
            <person name="Delcher A.L."/>
            <person name="Huson D.H."/>
            <person name="Kravitz S.A."/>
            <person name="Mouchard L."/>
            <person name="Reinert K."/>
            <person name="Remington K.A."/>
            <person name="Clark A.G."/>
            <person name="Waterman M.S."/>
            <person name="Eichler E.E."/>
            <person name="Adams M.D."/>
            <person name="Hunkapiller M.W."/>
            <person name="Myers E.W."/>
            <person name="Venter J.C."/>
        </authorList>
    </citation>
    <scope>NUCLEOTIDE SEQUENCE [LARGE SCALE GENOMIC DNA]</scope>
    <scope>VARIANT VAL-171</scope>
</reference>
<reference key="7">
    <citation type="journal article" date="2004" name="Genome Res.">
        <title>The status, quality, and expansion of the NIH full-length cDNA project: the Mammalian Gene Collection (MGC).</title>
        <authorList>
            <consortium name="The MGC Project Team"/>
        </authorList>
    </citation>
    <scope>NUCLEOTIDE SEQUENCE [LARGE SCALE MRNA]</scope>
    <scope>VARIANT VAL-171</scope>
    <source>
        <tissue>Placenta</tissue>
    </source>
</reference>
<reference key="8">
    <citation type="journal article" date="2011" name="BMC Syst. Biol.">
        <title>Initial characterization of the human central proteome.</title>
        <authorList>
            <person name="Burkard T.R."/>
            <person name="Planyavsky M."/>
            <person name="Kaupe I."/>
            <person name="Breitwieser F.P."/>
            <person name="Buerckstuemmer T."/>
            <person name="Bennett K.L."/>
            <person name="Superti-Furga G."/>
            <person name="Colinge J."/>
        </authorList>
    </citation>
    <scope>IDENTIFICATION BY MASS SPECTROMETRY [LARGE SCALE ANALYSIS]</scope>
</reference>
<reference key="9">
    <citation type="journal article" date="2013" name="J. Proteome Res.">
        <title>Toward a comprehensive characterization of a human cancer cell phosphoproteome.</title>
        <authorList>
            <person name="Zhou H."/>
            <person name="Di Palma S."/>
            <person name="Preisinger C."/>
            <person name="Peng M."/>
            <person name="Polat A.N."/>
            <person name="Heck A.J."/>
            <person name="Mohammed S."/>
        </authorList>
    </citation>
    <scope>PHOSPHORYLATION [LARGE SCALE ANALYSIS] AT SER-287</scope>
    <scope>IDENTIFICATION BY MASS SPECTROMETRY [LARGE SCALE ANALYSIS]</scope>
    <source>
        <tissue>Cervix carcinoma</tissue>
        <tissue>Erythroleukemia</tissue>
    </source>
</reference>
<reference key="10">
    <citation type="journal article" date="2018" name="Mol. Cell">
        <title>Removal of RTF2 from Stalled Replisomes Promotes Maintenance of Genome Integrity.</title>
        <authorList>
            <person name="Kottemann M.C."/>
            <person name="Conti B.A."/>
            <person name="Lach F.P."/>
            <person name="Smogorzewska A."/>
        </authorList>
    </citation>
    <scope>FUNCTION</scope>
    <scope>SUBCELLULAR LOCATION</scope>
    <scope>INTERACTION WITH DDI2</scope>
    <scope>DNA-BINDING</scope>
    <scope>PROTEASOME-MEDIATED DEGRADATION</scope>
</reference>
<dbReference type="EMBL" id="AF117231">
    <property type="protein sequence ID" value="AAF17212.1"/>
    <property type="molecule type" value="mRNA"/>
</dbReference>
<dbReference type="EMBL" id="AF161513">
    <property type="protein sequence ID" value="AAF29128.1"/>
    <property type="molecule type" value="mRNA"/>
</dbReference>
<dbReference type="EMBL" id="AF161518">
    <property type="protein sequence ID" value="AAF29133.1"/>
    <property type="molecule type" value="mRNA"/>
</dbReference>
<dbReference type="EMBL" id="AF212244">
    <property type="protein sequence ID" value="AAK14929.1"/>
    <property type="molecule type" value="mRNA"/>
</dbReference>
<dbReference type="EMBL" id="AK000481">
    <property type="protein sequence ID" value="BAA91193.1"/>
    <property type="molecule type" value="mRNA"/>
</dbReference>
<dbReference type="EMBL" id="AL109806">
    <property type="status" value="NOT_ANNOTATED_CDS"/>
    <property type="molecule type" value="Genomic_DNA"/>
</dbReference>
<dbReference type="EMBL" id="CH471077">
    <property type="protein sequence ID" value="EAW75539.1"/>
    <property type="molecule type" value="Genomic_DNA"/>
</dbReference>
<dbReference type="EMBL" id="CH471077">
    <property type="protein sequence ID" value="EAW75540.1"/>
    <property type="molecule type" value="Genomic_DNA"/>
</dbReference>
<dbReference type="EMBL" id="BC003359">
    <property type="protein sequence ID" value="AAH03359.1"/>
    <property type="molecule type" value="mRNA"/>
</dbReference>
<dbReference type="CCDS" id="CCDS13453.1"/>
<dbReference type="RefSeq" id="NP_001269964.1">
    <property type="nucleotide sequence ID" value="NM_001283035.1"/>
</dbReference>
<dbReference type="RefSeq" id="NP_001269965.1">
    <property type="nucleotide sequence ID" value="NM_001283036.1"/>
</dbReference>
<dbReference type="RefSeq" id="NP_001269966.1">
    <property type="nucleotide sequence ID" value="NM_001283037.1"/>
</dbReference>
<dbReference type="RefSeq" id="NP_057491.2">
    <property type="nucleotide sequence ID" value="NM_016407.5"/>
</dbReference>
<dbReference type="BioGRID" id="119578">
    <property type="interactions" value="82"/>
</dbReference>
<dbReference type="FunCoup" id="Q9BY42">
    <property type="interactions" value="3628"/>
</dbReference>
<dbReference type="IntAct" id="Q9BY42">
    <property type="interactions" value="37"/>
</dbReference>
<dbReference type="MINT" id="Q9BY42"/>
<dbReference type="STRING" id="9606.ENSP00000023939"/>
<dbReference type="GlyGen" id="Q9BY42">
    <property type="glycosylation" value="2 sites, 1 O-linked glycan (2 sites)"/>
</dbReference>
<dbReference type="iPTMnet" id="Q9BY42"/>
<dbReference type="PhosphoSitePlus" id="Q9BY42"/>
<dbReference type="BioMuta" id="RTFDC1"/>
<dbReference type="DMDM" id="313104242"/>
<dbReference type="jPOST" id="Q9BY42"/>
<dbReference type="MassIVE" id="Q9BY42"/>
<dbReference type="PaxDb" id="9606-ENSP00000023939"/>
<dbReference type="PeptideAtlas" id="Q9BY42"/>
<dbReference type="ProteomicsDB" id="79579"/>
<dbReference type="Pumba" id="Q9BY42"/>
<dbReference type="Antibodypedia" id="28888">
    <property type="antibodies" value="162 antibodies from 18 providers"/>
</dbReference>
<dbReference type="DNASU" id="51507"/>
<dbReference type="Ensembl" id="ENST00000357348.10">
    <property type="protein sequence ID" value="ENSP00000349906.6"/>
    <property type="gene ID" value="ENSG00000022277.13"/>
</dbReference>
<dbReference type="GeneID" id="51507"/>
<dbReference type="KEGG" id="hsa:51507"/>
<dbReference type="MANE-Select" id="ENST00000357348.10">
    <property type="protein sequence ID" value="ENSP00000349906.6"/>
    <property type="RefSeq nucleotide sequence ID" value="NM_016407.5"/>
    <property type="RefSeq protein sequence ID" value="NP_057491.2"/>
</dbReference>
<dbReference type="UCSC" id="uc002xxt.4">
    <property type="organism name" value="human"/>
</dbReference>
<dbReference type="AGR" id="HGNC:15890"/>
<dbReference type="CTD" id="51507"/>
<dbReference type="DisGeNET" id="51507"/>
<dbReference type="GeneCards" id="RTF2"/>
<dbReference type="HGNC" id="HGNC:15890">
    <property type="gene designation" value="RTF2"/>
</dbReference>
<dbReference type="HPA" id="ENSG00000022277">
    <property type="expression patterns" value="Low tissue specificity"/>
</dbReference>
<dbReference type="neXtProt" id="NX_Q9BY42"/>
<dbReference type="OpenTargets" id="ENSG00000022277"/>
<dbReference type="PharmGKB" id="PA25756"/>
<dbReference type="VEuPathDB" id="HostDB:ENSG00000022277"/>
<dbReference type="eggNOG" id="KOG3113">
    <property type="taxonomic scope" value="Eukaryota"/>
</dbReference>
<dbReference type="GeneTree" id="ENSGT00390000010923"/>
<dbReference type="InParanoid" id="Q9BY42"/>
<dbReference type="OMA" id="EFRWLHC"/>
<dbReference type="OrthoDB" id="247013at2759"/>
<dbReference type="PAN-GO" id="Q9BY42">
    <property type="GO annotations" value="2 GO annotations based on evolutionary models"/>
</dbReference>
<dbReference type="PhylomeDB" id="Q9BY42"/>
<dbReference type="TreeFam" id="TF314621"/>
<dbReference type="PathwayCommons" id="Q9BY42"/>
<dbReference type="SignaLink" id="Q9BY42"/>
<dbReference type="BioGRID-ORCS" id="51507">
    <property type="hits" value="741 hits in 1162 CRISPR screens"/>
</dbReference>
<dbReference type="CD-CODE" id="91857CE7">
    <property type="entry name" value="Nucleolus"/>
</dbReference>
<dbReference type="ChiTaRS" id="RTFDC1">
    <property type="organism name" value="human"/>
</dbReference>
<dbReference type="GeneWiki" id="C20orf43"/>
<dbReference type="GenomeRNAi" id="51507"/>
<dbReference type="Pharos" id="Q9BY42">
    <property type="development level" value="Tbio"/>
</dbReference>
<dbReference type="PRO" id="PR:Q9BY42"/>
<dbReference type="Proteomes" id="UP000005640">
    <property type="component" value="Chromosome 20"/>
</dbReference>
<dbReference type="RNAct" id="Q9BY42">
    <property type="molecule type" value="protein"/>
</dbReference>
<dbReference type="Bgee" id="ENSG00000022277">
    <property type="expression patterns" value="Expressed in C1 segment of cervical spinal cord and 205 other cell types or tissues"/>
</dbReference>
<dbReference type="ExpressionAtlas" id="Q9BY42">
    <property type="expression patterns" value="baseline and differential"/>
</dbReference>
<dbReference type="GO" id="GO:0005634">
    <property type="term" value="C:nucleus"/>
    <property type="evidence" value="ECO:0000318"/>
    <property type="project" value="GO_Central"/>
</dbReference>
<dbReference type="GO" id="GO:0005657">
    <property type="term" value="C:replication fork"/>
    <property type="evidence" value="ECO:0000314"/>
    <property type="project" value="UniProtKB"/>
</dbReference>
<dbReference type="GO" id="GO:0003677">
    <property type="term" value="F:DNA binding"/>
    <property type="evidence" value="ECO:0000314"/>
    <property type="project" value="UniProtKB"/>
</dbReference>
<dbReference type="GO" id="GO:0072711">
    <property type="term" value="P:cellular response to hydroxyurea"/>
    <property type="evidence" value="ECO:0000315"/>
    <property type="project" value="UniProtKB"/>
</dbReference>
<dbReference type="GO" id="GO:1902979">
    <property type="term" value="P:mitotic DNA replication termination"/>
    <property type="evidence" value="ECO:0007669"/>
    <property type="project" value="InterPro"/>
</dbReference>
<dbReference type="GO" id="GO:0097752">
    <property type="term" value="P:regulation of DNA stability"/>
    <property type="evidence" value="ECO:0000315"/>
    <property type="project" value="UniProtKB"/>
</dbReference>
<dbReference type="CDD" id="cd16653">
    <property type="entry name" value="RING-like_Rtf2"/>
    <property type="match status" value="1"/>
</dbReference>
<dbReference type="InterPro" id="IPR006735">
    <property type="entry name" value="Rtf2"/>
</dbReference>
<dbReference type="InterPro" id="IPR027799">
    <property type="entry name" value="Rtf2_RING-finger"/>
</dbReference>
<dbReference type="PANTHER" id="PTHR12775">
    <property type="entry name" value="PROTEIN C20ORF43 HOMOLOG"/>
    <property type="match status" value="1"/>
</dbReference>
<dbReference type="PANTHER" id="PTHR12775:SF0">
    <property type="entry name" value="REPLICATION TERMINATION FACTOR 2"/>
    <property type="match status" value="1"/>
</dbReference>
<dbReference type="Pfam" id="PF04641">
    <property type="entry name" value="Rtf2"/>
    <property type="match status" value="1"/>
</dbReference>
<organism>
    <name type="scientific">Homo sapiens</name>
    <name type="common">Human</name>
    <dbReference type="NCBI Taxonomy" id="9606"/>
    <lineage>
        <taxon>Eukaryota</taxon>
        <taxon>Metazoa</taxon>
        <taxon>Chordata</taxon>
        <taxon>Craniata</taxon>
        <taxon>Vertebrata</taxon>
        <taxon>Euteleostomi</taxon>
        <taxon>Mammalia</taxon>
        <taxon>Eutheria</taxon>
        <taxon>Euarchontoglires</taxon>
        <taxon>Primates</taxon>
        <taxon>Haplorrhini</taxon>
        <taxon>Catarrhini</taxon>
        <taxon>Hominidae</taxon>
        <taxon>Homo</taxon>
    </lineage>
</organism>
<proteinExistence type="evidence at protein level"/>
<gene>
    <name evidence="11" type="primary">RTF2</name>
    <name type="synonym">C20orf43</name>
    <name evidence="11" type="synonym">RTFDC1</name>
    <name type="ORF">AD-007</name>
    <name type="ORF">CDA05</name>
    <name type="ORF">HSPC164</name>
    <name type="ORF">HSPC169</name>
</gene>
<feature type="chain" id="PRO_0000079427" description="Replication termination factor 2">
    <location>
        <begin position="1"/>
        <end position="306"/>
    </location>
</feature>
<feature type="region of interest" description="Disordered" evidence="1">
    <location>
        <begin position="193"/>
        <end position="276"/>
    </location>
</feature>
<feature type="compositionally biased region" description="Basic and acidic residues" evidence="1">
    <location>
        <begin position="226"/>
        <end position="240"/>
    </location>
</feature>
<feature type="compositionally biased region" description="Polar residues" evidence="1">
    <location>
        <begin position="243"/>
        <end position="255"/>
    </location>
</feature>
<feature type="modified residue" description="Phosphoserine" evidence="12">
    <location>
        <position position="287"/>
    </location>
</feature>
<feature type="sequence variant" id="VAR_028134" description="In dbSNP:rs6024909.">
    <original>T</original>
    <variation>A</variation>
    <location>
        <position position="159"/>
    </location>
</feature>
<feature type="sequence variant" id="VAR_028135" description="In dbSNP:rs1059768." evidence="2 3 4 5 7 8">
    <original>M</original>
    <variation>V</variation>
    <location>
        <position position="171"/>
    </location>
</feature>
<feature type="sequence conflict" description="In Ref. 4; BAA91193." evidence="9" ref="4">
    <original>R</original>
    <variation>G</variation>
    <location>
        <position position="189"/>
    </location>
</feature>
<feature type="sequence conflict" description="In Ref. 1; AAF17212 and 3; AAK14929." evidence="9" ref="1 3">
    <original>K</original>
    <variation>N</variation>
    <location>
        <position position="194"/>
    </location>
</feature>
<feature type="sequence conflict" description="In Ref. 1; AAF17212." evidence="9" ref="1">
    <original>L</original>
    <variation>R</variation>
    <location>
        <position position="195"/>
    </location>
</feature>
<feature type="sequence conflict" description="In Ref. 3; AAK14929." evidence="9" ref="3">
    <original>L</original>
    <variation>W</variation>
    <location>
        <position position="195"/>
    </location>
</feature>
<feature type="sequence conflict" description="In Ref. 2; AAF29128." evidence="9" ref="2">
    <original>T</original>
    <variation>P</variation>
    <location>
        <position position="199"/>
    </location>
</feature>
<feature type="sequence conflict" description="In Ref. 2; AAF29128." evidence="9" ref="2">
    <original>V</original>
    <variation>A</variation>
    <location>
        <position position="208"/>
    </location>
</feature>
<keyword id="KW-0158">Chromosome</keyword>
<keyword id="KW-0597">Phosphoprotein</keyword>
<keyword id="KW-1267">Proteomics identification</keyword>
<keyword id="KW-1185">Reference proteome</keyword>
<accession>Q9BY42</accession>
<accession>E1P5Z9</accession>
<accession>Q9BYL7</accession>
<accession>Q9HCV9</accession>
<accession>Q9NX29</accession>
<accession>Q9NZZ8</accession>
<accession>Q9P002</accession>
<accession>Q9UHW3</accession>
<name>RTF2_HUMAN</name>
<evidence type="ECO:0000256" key="1">
    <source>
        <dbReference type="SAM" id="MobiDB-lite"/>
    </source>
</evidence>
<evidence type="ECO:0000269" key="2">
    <source>
    </source>
</evidence>
<evidence type="ECO:0000269" key="3">
    <source>
    </source>
</evidence>
<evidence type="ECO:0000269" key="4">
    <source>
    </source>
</evidence>
<evidence type="ECO:0000269" key="5">
    <source>
    </source>
</evidence>
<evidence type="ECO:0000269" key="6">
    <source>
    </source>
</evidence>
<evidence type="ECO:0000269" key="7">
    <source ref="3"/>
</evidence>
<evidence type="ECO:0000269" key="8">
    <source ref="6"/>
</evidence>
<evidence type="ECO:0000305" key="9"/>
<evidence type="ECO:0000305" key="10">
    <source>
    </source>
</evidence>
<evidence type="ECO:0000312" key="11">
    <source>
        <dbReference type="HGNC" id="HGNC:15890"/>
    </source>
</evidence>
<evidence type="ECO:0007744" key="12">
    <source>
    </source>
</evidence>